<sequence>MSQDLEQKLWSIASGIPFVSDYFLQASPARKLKKENLFSKVFETYFLELGSGWGEVAIAMALQRRNTGFVLMEKKFDRIRHTIREIEKHSLDNVKILCVNFNWFLADVFEENLFSEILLNFPDPWPKKRHHKKRTINSKFIESLRVLLPEKGKFSFATDYGPYARKTIRLFRDSEIFKPETMEFRLERKEIPVSHFERKKRKEGKRIYYIDQILIRK</sequence>
<evidence type="ECO:0000250" key="1"/>
<evidence type="ECO:0000255" key="2">
    <source>
        <dbReference type="HAMAP-Rule" id="MF_01057"/>
    </source>
</evidence>
<dbReference type="EC" id="2.1.1.33" evidence="2"/>
<dbReference type="EMBL" id="CP000348">
    <property type="protein sequence ID" value="ABJ80283.1"/>
    <property type="molecule type" value="Genomic_DNA"/>
</dbReference>
<dbReference type="RefSeq" id="WP_011671187.1">
    <property type="nucleotide sequence ID" value="NC_008508.1"/>
</dbReference>
<dbReference type="SMR" id="Q04XB2"/>
<dbReference type="KEGG" id="lbl:LBL_2969"/>
<dbReference type="HOGENOM" id="CLU_050910_2_0_12"/>
<dbReference type="UniPathway" id="UPA00989"/>
<dbReference type="GO" id="GO:0043527">
    <property type="term" value="C:tRNA methyltransferase complex"/>
    <property type="evidence" value="ECO:0007669"/>
    <property type="project" value="TreeGrafter"/>
</dbReference>
<dbReference type="GO" id="GO:0008176">
    <property type="term" value="F:tRNA (guanine(46)-N7)-methyltransferase activity"/>
    <property type="evidence" value="ECO:0007669"/>
    <property type="project" value="UniProtKB-UniRule"/>
</dbReference>
<dbReference type="Gene3D" id="3.40.50.150">
    <property type="entry name" value="Vaccinia Virus protein VP39"/>
    <property type="match status" value="1"/>
</dbReference>
<dbReference type="HAMAP" id="MF_01057">
    <property type="entry name" value="tRNA_methyltr_TrmB"/>
    <property type="match status" value="1"/>
</dbReference>
<dbReference type="InterPro" id="IPR029063">
    <property type="entry name" value="SAM-dependent_MTases_sf"/>
</dbReference>
<dbReference type="InterPro" id="IPR003358">
    <property type="entry name" value="tRNA_(Gua-N-7)_MeTrfase_Trmb"/>
</dbReference>
<dbReference type="InterPro" id="IPR055361">
    <property type="entry name" value="tRNA_methyltr_TrmB_bact"/>
</dbReference>
<dbReference type="PANTHER" id="PTHR23417">
    <property type="entry name" value="3-DEOXY-D-MANNO-OCTULOSONIC-ACID TRANSFERASE/TRNA GUANINE-N 7 - -METHYLTRANSFERASE"/>
    <property type="match status" value="1"/>
</dbReference>
<dbReference type="PANTHER" id="PTHR23417:SF14">
    <property type="entry name" value="PENTACOTRIPEPTIDE-REPEAT REGION OF PRORP DOMAIN-CONTAINING PROTEIN"/>
    <property type="match status" value="1"/>
</dbReference>
<dbReference type="Pfam" id="PF02390">
    <property type="entry name" value="Methyltransf_4"/>
    <property type="match status" value="1"/>
</dbReference>
<dbReference type="SUPFAM" id="SSF53335">
    <property type="entry name" value="S-adenosyl-L-methionine-dependent methyltransferases"/>
    <property type="match status" value="1"/>
</dbReference>
<dbReference type="PROSITE" id="PS51625">
    <property type="entry name" value="SAM_MT_TRMB"/>
    <property type="match status" value="1"/>
</dbReference>
<gene>
    <name evidence="2" type="primary">trmB</name>
    <name type="ordered locus">LBL_2969</name>
</gene>
<feature type="chain" id="PRO_0000288170" description="tRNA (guanine-N(7)-)-methyltransferase">
    <location>
        <begin position="1"/>
        <end position="217"/>
    </location>
</feature>
<feature type="active site" evidence="1">
    <location>
        <position position="123"/>
    </location>
</feature>
<feature type="binding site" evidence="2">
    <location>
        <position position="48"/>
    </location>
    <ligand>
        <name>S-adenosyl-L-methionine</name>
        <dbReference type="ChEBI" id="CHEBI:59789"/>
    </ligand>
</feature>
<feature type="binding site" evidence="2">
    <location>
        <position position="73"/>
    </location>
    <ligand>
        <name>S-adenosyl-L-methionine</name>
        <dbReference type="ChEBI" id="CHEBI:59789"/>
    </ligand>
</feature>
<feature type="binding site" evidence="2">
    <location>
        <position position="100"/>
    </location>
    <ligand>
        <name>S-adenosyl-L-methionine</name>
        <dbReference type="ChEBI" id="CHEBI:59789"/>
    </ligand>
</feature>
<feature type="binding site" evidence="2">
    <location>
        <position position="123"/>
    </location>
    <ligand>
        <name>S-adenosyl-L-methionine</name>
        <dbReference type="ChEBI" id="CHEBI:59789"/>
    </ligand>
</feature>
<feature type="binding site" evidence="2">
    <location>
        <position position="127"/>
    </location>
    <ligand>
        <name>substrate</name>
    </ligand>
</feature>
<feature type="binding site" evidence="2">
    <location>
        <position position="159"/>
    </location>
    <ligand>
        <name>substrate</name>
    </ligand>
</feature>
<name>TRMB_LEPBL</name>
<reference key="1">
    <citation type="journal article" date="2006" name="Proc. Natl. Acad. Sci. U.S.A.">
        <title>Genome reduction in Leptospira borgpetersenii reflects limited transmission potential.</title>
        <authorList>
            <person name="Bulach D.M."/>
            <person name="Zuerner R.L."/>
            <person name="Wilson P."/>
            <person name="Seemann T."/>
            <person name="McGrath A."/>
            <person name="Cullen P.A."/>
            <person name="Davis J."/>
            <person name="Johnson M."/>
            <person name="Kuczek E."/>
            <person name="Alt D.P."/>
            <person name="Peterson-Burch B."/>
            <person name="Coppel R.L."/>
            <person name="Rood J.I."/>
            <person name="Davies J.K."/>
            <person name="Adler B."/>
        </authorList>
    </citation>
    <scope>NUCLEOTIDE SEQUENCE [LARGE SCALE GENOMIC DNA]</scope>
    <source>
        <strain>L550</strain>
    </source>
</reference>
<organism>
    <name type="scientific">Leptospira borgpetersenii serovar Hardjo-bovis (strain L550)</name>
    <dbReference type="NCBI Taxonomy" id="355276"/>
    <lineage>
        <taxon>Bacteria</taxon>
        <taxon>Pseudomonadati</taxon>
        <taxon>Spirochaetota</taxon>
        <taxon>Spirochaetia</taxon>
        <taxon>Leptospirales</taxon>
        <taxon>Leptospiraceae</taxon>
        <taxon>Leptospira</taxon>
    </lineage>
</organism>
<accession>Q04XB2</accession>
<proteinExistence type="inferred from homology"/>
<comment type="function">
    <text evidence="2">Catalyzes the formation of N(7)-methylguanine at position 46 (m7G46) in tRNA.</text>
</comment>
<comment type="catalytic activity">
    <reaction evidence="2">
        <text>guanosine(46) in tRNA + S-adenosyl-L-methionine = N(7)-methylguanosine(46) in tRNA + S-adenosyl-L-homocysteine</text>
        <dbReference type="Rhea" id="RHEA:42708"/>
        <dbReference type="Rhea" id="RHEA-COMP:10188"/>
        <dbReference type="Rhea" id="RHEA-COMP:10189"/>
        <dbReference type="ChEBI" id="CHEBI:57856"/>
        <dbReference type="ChEBI" id="CHEBI:59789"/>
        <dbReference type="ChEBI" id="CHEBI:74269"/>
        <dbReference type="ChEBI" id="CHEBI:74480"/>
        <dbReference type="EC" id="2.1.1.33"/>
    </reaction>
</comment>
<comment type="pathway">
    <text evidence="2">tRNA modification; N(7)-methylguanine-tRNA biosynthesis.</text>
</comment>
<comment type="similarity">
    <text evidence="2">Belongs to the class I-like SAM-binding methyltransferase superfamily. TrmB family.</text>
</comment>
<protein>
    <recommendedName>
        <fullName evidence="2">tRNA (guanine-N(7)-)-methyltransferase</fullName>
        <ecNumber evidence="2">2.1.1.33</ecNumber>
    </recommendedName>
    <alternativeName>
        <fullName evidence="2">tRNA (guanine(46)-N(7))-methyltransferase</fullName>
    </alternativeName>
    <alternativeName>
        <fullName evidence="2">tRNA(m7G46)-methyltransferase</fullName>
    </alternativeName>
</protein>
<keyword id="KW-0489">Methyltransferase</keyword>
<keyword id="KW-0949">S-adenosyl-L-methionine</keyword>
<keyword id="KW-0808">Transferase</keyword>
<keyword id="KW-0819">tRNA processing</keyword>